<comment type="function">
    <text evidence="5">Sequence-specific RNA-binding protein that regulates translation and mRNA stability by binding the 3'-UTR of target mRNAs. Binds the APUM-binding elements (APBEs) in the 3'-UTR mRNA sequence of CLV1, PNH, WUS and FAS2.</text>
</comment>
<comment type="subcellular location">
    <subcellularLocation>
        <location evidence="6">Cytoplasm</location>
    </subcellularLocation>
</comment>
<comment type="domain">
    <text evidence="1">The pumilio repeats mediate the association with RNA by packing together to form a right-handed superhelix that approximates a half donut. The number as well as the specific sequence of the repeats determine the specificity for target mRNAs (By similarity).</text>
</comment>
<comment type="sequence caution" evidence="6">
    <conflict type="erroneous gene model prediction">
        <sequence resource="EMBL-CDS" id="AAF02808"/>
    </conflict>
</comment>
<comment type="sequence caution" evidence="6">
    <conflict type="erroneous initiation">
        <sequence resource="EMBL-CDS" id="BAC42549"/>
    </conflict>
    <text>Truncated N-terminus.</text>
</comment>
<proteinExistence type="evidence at protein level"/>
<evidence type="ECO:0000250" key="1"/>
<evidence type="ECO:0000250" key="2">
    <source>
        <dbReference type="UniProtKB" id="Q9ZW02"/>
    </source>
</evidence>
<evidence type="ECO:0000255" key="3">
    <source>
        <dbReference type="PROSITE-ProRule" id="PRU00318"/>
    </source>
</evidence>
<evidence type="ECO:0000256" key="4">
    <source>
        <dbReference type="SAM" id="MobiDB-lite"/>
    </source>
</evidence>
<evidence type="ECO:0000269" key="5">
    <source>
    </source>
</evidence>
<evidence type="ECO:0000305" key="6"/>
<evidence type="ECO:0007744" key="7">
    <source>
    </source>
</evidence>
<name>PUM4_ARATH</name>
<accession>Q9SS47</accession>
<accession>Q8GY24</accession>
<protein>
    <recommendedName>
        <fullName>Pumilio homolog 4</fullName>
        <shortName>APUM-4</shortName>
        <shortName>AtPUM4</shortName>
    </recommendedName>
</protein>
<reference key="1">
    <citation type="journal article" date="2000" name="Nature">
        <title>Sequence and analysis of chromosome 3 of the plant Arabidopsis thaliana.</title>
        <authorList>
            <person name="Salanoubat M."/>
            <person name="Lemcke K."/>
            <person name="Rieger M."/>
            <person name="Ansorge W."/>
            <person name="Unseld M."/>
            <person name="Fartmann B."/>
            <person name="Valle G."/>
            <person name="Bloecker H."/>
            <person name="Perez-Alonso M."/>
            <person name="Obermaier B."/>
            <person name="Delseny M."/>
            <person name="Boutry M."/>
            <person name="Grivell L.A."/>
            <person name="Mache R."/>
            <person name="Puigdomenech P."/>
            <person name="De Simone V."/>
            <person name="Choisne N."/>
            <person name="Artiguenave F."/>
            <person name="Robert C."/>
            <person name="Brottier P."/>
            <person name="Wincker P."/>
            <person name="Cattolico L."/>
            <person name="Weissenbach J."/>
            <person name="Saurin W."/>
            <person name="Quetier F."/>
            <person name="Schaefer M."/>
            <person name="Mueller-Auer S."/>
            <person name="Gabel C."/>
            <person name="Fuchs M."/>
            <person name="Benes V."/>
            <person name="Wurmbach E."/>
            <person name="Drzonek H."/>
            <person name="Erfle H."/>
            <person name="Jordan N."/>
            <person name="Bangert S."/>
            <person name="Wiedelmann R."/>
            <person name="Kranz H."/>
            <person name="Voss H."/>
            <person name="Holland R."/>
            <person name="Brandt P."/>
            <person name="Nyakatura G."/>
            <person name="Vezzi A."/>
            <person name="D'Angelo M."/>
            <person name="Pallavicini A."/>
            <person name="Toppo S."/>
            <person name="Simionati B."/>
            <person name="Conrad A."/>
            <person name="Hornischer K."/>
            <person name="Kauer G."/>
            <person name="Loehnert T.-H."/>
            <person name="Nordsiek G."/>
            <person name="Reichelt J."/>
            <person name="Scharfe M."/>
            <person name="Schoen O."/>
            <person name="Bargues M."/>
            <person name="Terol J."/>
            <person name="Climent J."/>
            <person name="Navarro P."/>
            <person name="Collado C."/>
            <person name="Perez-Perez A."/>
            <person name="Ottenwaelder B."/>
            <person name="Duchemin D."/>
            <person name="Cooke R."/>
            <person name="Laudie M."/>
            <person name="Berger-Llauro C."/>
            <person name="Purnelle B."/>
            <person name="Masuy D."/>
            <person name="de Haan M."/>
            <person name="Maarse A.C."/>
            <person name="Alcaraz J.-P."/>
            <person name="Cottet A."/>
            <person name="Casacuberta E."/>
            <person name="Monfort A."/>
            <person name="Argiriou A."/>
            <person name="Flores M."/>
            <person name="Liguori R."/>
            <person name="Vitale D."/>
            <person name="Mannhaupt G."/>
            <person name="Haase D."/>
            <person name="Schoof H."/>
            <person name="Rudd S."/>
            <person name="Zaccaria P."/>
            <person name="Mewes H.-W."/>
            <person name="Mayer K.F.X."/>
            <person name="Kaul S."/>
            <person name="Town C.D."/>
            <person name="Koo H.L."/>
            <person name="Tallon L.J."/>
            <person name="Jenkins J."/>
            <person name="Rooney T."/>
            <person name="Rizzo M."/>
            <person name="Walts A."/>
            <person name="Utterback T."/>
            <person name="Fujii C.Y."/>
            <person name="Shea T.P."/>
            <person name="Creasy T.H."/>
            <person name="Haas B."/>
            <person name="Maiti R."/>
            <person name="Wu D."/>
            <person name="Peterson J."/>
            <person name="Van Aken S."/>
            <person name="Pai G."/>
            <person name="Militscher J."/>
            <person name="Sellers P."/>
            <person name="Gill J.E."/>
            <person name="Feldblyum T.V."/>
            <person name="Preuss D."/>
            <person name="Lin X."/>
            <person name="Nierman W.C."/>
            <person name="Salzberg S.L."/>
            <person name="White O."/>
            <person name="Venter J.C."/>
            <person name="Fraser C.M."/>
            <person name="Kaneko T."/>
            <person name="Nakamura Y."/>
            <person name="Sato S."/>
            <person name="Kato T."/>
            <person name="Asamizu E."/>
            <person name="Sasamoto S."/>
            <person name="Kimura T."/>
            <person name="Idesawa K."/>
            <person name="Kawashima K."/>
            <person name="Kishida Y."/>
            <person name="Kiyokawa C."/>
            <person name="Kohara M."/>
            <person name="Matsumoto M."/>
            <person name="Matsuno A."/>
            <person name="Muraki A."/>
            <person name="Nakayama S."/>
            <person name="Nakazaki N."/>
            <person name="Shinpo S."/>
            <person name="Takeuchi C."/>
            <person name="Wada T."/>
            <person name="Watanabe A."/>
            <person name="Yamada M."/>
            <person name="Yasuda M."/>
            <person name="Tabata S."/>
        </authorList>
    </citation>
    <scope>NUCLEOTIDE SEQUENCE [LARGE SCALE GENOMIC DNA]</scope>
    <source>
        <strain>cv. Columbia</strain>
    </source>
</reference>
<reference key="2">
    <citation type="journal article" date="2017" name="Plant J.">
        <title>Araport11: a complete reannotation of the Arabidopsis thaliana reference genome.</title>
        <authorList>
            <person name="Cheng C.Y."/>
            <person name="Krishnakumar V."/>
            <person name="Chan A.P."/>
            <person name="Thibaud-Nissen F."/>
            <person name="Schobel S."/>
            <person name="Town C.D."/>
        </authorList>
    </citation>
    <scope>GENOME REANNOTATION</scope>
    <source>
        <strain>cv. Columbia</strain>
    </source>
</reference>
<reference key="3">
    <citation type="journal article" date="2002" name="Science">
        <title>Functional annotation of a full-length Arabidopsis cDNA collection.</title>
        <authorList>
            <person name="Seki M."/>
            <person name="Narusaka M."/>
            <person name="Kamiya A."/>
            <person name="Ishida J."/>
            <person name="Satou M."/>
            <person name="Sakurai T."/>
            <person name="Nakajima M."/>
            <person name="Enju A."/>
            <person name="Akiyama K."/>
            <person name="Oono Y."/>
            <person name="Muramatsu M."/>
            <person name="Hayashizaki Y."/>
            <person name="Kawai J."/>
            <person name="Carninci P."/>
            <person name="Itoh M."/>
            <person name="Ishii Y."/>
            <person name="Arakawa T."/>
            <person name="Shibata K."/>
            <person name="Shinagawa A."/>
            <person name="Shinozaki K."/>
        </authorList>
    </citation>
    <scope>NUCLEOTIDE SEQUENCE [LARGE SCALE MRNA] OF 632-1003</scope>
    <source>
        <strain>cv. Columbia</strain>
    </source>
</reference>
<reference key="4">
    <citation type="journal article" date="2003" name="Science">
        <title>Empirical analysis of transcriptional activity in the Arabidopsis genome.</title>
        <authorList>
            <person name="Yamada K."/>
            <person name="Lim J."/>
            <person name="Dale J.M."/>
            <person name="Chen H."/>
            <person name="Shinn P."/>
            <person name="Palm C.J."/>
            <person name="Southwick A.M."/>
            <person name="Wu H.C."/>
            <person name="Kim C.J."/>
            <person name="Nguyen M."/>
            <person name="Pham P.K."/>
            <person name="Cheuk R.F."/>
            <person name="Karlin-Newmann G."/>
            <person name="Liu S.X."/>
            <person name="Lam B."/>
            <person name="Sakano H."/>
            <person name="Wu T."/>
            <person name="Yu G."/>
            <person name="Miranda M."/>
            <person name="Quach H.L."/>
            <person name="Tripp M."/>
            <person name="Chang C.H."/>
            <person name="Lee J.M."/>
            <person name="Toriumi M.J."/>
            <person name="Chan M.M."/>
            <person name="Tang C.C."/>
            <person name="Onodera C.S."/>
            <person name="Deng J.M."/>
            <person name="Akiyama K."/>
            <person name="Ansari Y."/>
            <person name="Arakawa T."/>
            <person name="Banh J."/>
            <person name="Banno F."/>
            <person name="Bowser L."/>
            <person name="Brooks S.Y."/>
            <person name="Carninci P."/>
            <person name="Chao Q."/>
            <person name="Choy N."/>
            <person name="Enju A."/>
            <person name="Goldsmith A.D."/>
            <person name="Gurjal M."/>
            <person name="Hansen N.F."/>
            <person name="Hayashizaki Y."/>
            <person name="Johnson-Hopson C."/>
            <person name="Hsuan V.W."/>
            <person name="Iida K."/>
            <person name="Karnes M."/>
            <person name="Khan S."/>
            <person name="Koesema E."/>
            <person name="Ishida J."/>
            <person name="Jiang P.X."/>
            <person name="Jones T."/>
            <person name="Kawai J."/>
            <person name="Kamiya A."/>
            <person name="Meyers C."/>
            <person name="Nakajima M."/>
            <person name="Narusaka M."/>
            <person name="Seki M."/>
            <person name="Sakurai T."/>
            <person name="Satou M."/>
            <person name="Tamse R."/>
            <person name="Vaysberg M."/>
            <person name="Wallender E.K."/>
            <person name="Wong C."/>
            <person name="Yamamura Y."/>
            <person name="Yuan S."/>
            <person name="Shinozaki K."/>
            <person name="Davis R.W."/>
            <person name="Theologis A."/>
            <person name="Ecker J.R."/>
        </authorList>
    </citation>
    <scope>NUCLEOTIDE SEQUENCE [LARGE SCALE MRNA] OF 674-1003</scope>
    <source>
        <strain>cv. Columbia</strain>
    </source>
</reference>
<reference key="5">
    <citation type="journal article" date="2009" name="FEBS J.">
        <title>Molecular characterization of Arabidopsis thaliana PUF proteins -- binding specificity and target candidates.</title>
        <authorList>
            <person name="Francischini C.W."/>
            <person name="Quaggio R.B."/>
        </authorList>
    </citation>
    <scope>GENE FAMILY</scope>
    <scope>FUNCTION</scope>
    <scope>RNA-BINDING</scope>
</reference>
<reference key="6">
    <citation type="journal article" date="2009" name="Plant Physiol.">
        <title>Large-scale Arabidopsis phosphoproteome profiling reveals novel chloroplast kinase substrates and phosphorylation networks.</title>
        <authorList>
            <person name="Reiland S."/>
            <person name="Messerli G."/>
            <person name="Baerenfaller K."/>
            <person name="Gerrits B."/>
            <person name="Endler A."/>
            <person name="Grossmann J."/>
            <person name="Gruissem W."/>
            <person name="Baginsky S."/>
        </authorList>
    </citation>
    <scope>PHOSPHORYLATION [LARGE SCALE ANALYSIS] AT SER-225</scope>
    <scope>IDENTIFICATION BY MASS SPECTROMETRY [LARGE SCALE ANALYSIS]</scope>
</reference>
<reference key="7">
    <citation type="journal article" date="2010" name="BMC Plant Biol.">
        <title>The Puf family of RNA-binding proteins in plants: phylogeny, structural modeling, activity and subcellular localization.</title>
        <authorList>
            <person name="Tam P.P."/>
            <person name="Barrette-Ng I.H."/>
            <person name="Simon D.M."/>
            <person name="Tam M.W."/>
            <person name="Ang A.L."/>
            <person name="Muench D.G."/>
        </authorList>
    </citation>
    <scope>GENE FAMILY</scope>
</reference>
<gene>
    <name type="primary">APUM4</name>
    <name type="ordered locus">At3g10360</name>
    <name type="ORF">F14P13.4</name>
</gene>
<feature type="chain" id="PRO_0000401386" description="Pumilio homolog 4">
    <location>
        <begin position="1"/>
        <end position="1003"/>
    </location>
</feature>
<feature type="domain" description="PUM-HD" evidence="3">
    <location>
        <begin position="644"/>
        <end position="984"/>
    </location>
</feature>
<feature type="repeat" description="Pumilio 1">
    <location>
        <begin position="664"/>
        <end position="699"/>
    </location>
</feature>
<feature type="repeat" description="Pumilio 2">
    <location>
        <begin position="700"/>
        <end position="735"/>
    </location>
</feature>
<feature type="repeat" description="Pumilio 3">
    <location>
        <begin position="736"/>
        <end position="771"/>
    </location>
</feature>
<feature type="repeat" description="Pumilio 4">
    <location>
        <begin position="772"/>
        <end position="807"/>
    </location>
</feature>
<feature type="repeat" description="Pumilio 5">
    <location>
        <begin position="808"/>
        <end position="843"/>
    </location>
</feature>
<feature type="repeat" description="Pumilio 6">
    <location>
        <begin position="845"/>
        <end position="880"/>
    </location>
</feature>
<feature type="repeat" description="Pumilio 7">
    <location>
        <begin position="881"/>
        <end position="916"/>
    </location>
</feature>
<feature type="repeat" description="Pumilio 8">
    <location>
        <begin position="917"/>
        <end position="958"/>
    </location>
</feature>
<feature type="region of interest" description="Disordered" evidence="4">
    <location>
        <begin position="38"/>
        <end position="65"/>
    </location>
</feature>
<feature type="region of interest" description="Disordered" evidence="4">
    <location>
        <begin position="285"/>
        <end position="328"/>
    </location>
</feature>
<feature type="compositionally biased region" description="Basic and acidic residues" evidence="4">
    <location>
        <begin position="46"/>
        <end position="57"/>
    </location>
</feature>
<feature type="compositionally biased region" description="Polar residues" evidence="4">
    <location>
        <begin position="285"/>
        <end position="300"/>
    </location>
</feature>
<feature type="modified residue" description="Phosphoserine" evidence="7">
    <location>
        <position position="225"/>
    </location>
</feature>
<feature type="modified residue" description="Phosphothreonine" evidence="2">
    <location>
        <position position="305"/>
    </location>
</feature>
<feature type="sequence conflict" description="In Ref. 3; BAC42549 and 4; AAO63375." evidence="6" ref="3 4">
    <original>E</original>
    <variation>K</variation>
    <location>
        <position position="687"/>
    </location>
</feature>
<sequence length="1003" mass="111613">MVTNSYMDTRSNLTSVNRGSNVDLEDRFQRELESLLQQHRNQQSFGRERERDIDVHRSGSAPPTVEGLLRAMDNQYLNNNNSDHRDVGNISSITTSNGVELLSDDELRWHPEYLSYYYSNEHSNPRLPPPLLSREDWRVAQRFHNSESVFDPVGEWRKKTVEVDNSSSLFSVQPGVPVEQAENDLMELRNAVAQGRSQKVQRLDQGREDLIGLSGYSGLGPRRKSFADILQEGLERDAALGSQLSRPASCNTFRDMKDAAVLSNFSAGGFDSPLAFHDSLHSTAKNSPNTMLGSTMSSPVPRNRTPDSHLVGRSTASGLPPIGTRVGPVEKKNTFGTAIQNCESYTAADVADTLSRLNMSEMSQVKENHMQSQLQVELENQSDVMRYIPNGHKKALRQQNTAETKDHLFSANYGGMSGYGASLGASTVGSHGQVNIPKRTSSSASLYSTSDHSRLGSVGLSDVNIRNGNINGTDFSTAGGYMAKNKLNSLAEHYSAEGSHLTGDGDRQSLNRLINQVASELHSPVMDPHYSQYLHTASSTAAPIDHSLIRNNFGTSNGDTANEYLAMLLAQNRQQLGNLNAANSRFFESPSYDLGNMYLGNHLPSPSKNSRNFQNMRMSQSASMMKVPFGGLQGSSHVDIGSTAEASLLEGFKNNKTRSLELSEIVGHVIEFSMDQYGSRFIQQKLETATDEEKNAIFPEILPYGRTLMTDVFGNYVIQKFFEHGTTKQRKELAEQVTGHVLALSLQMYGCRVIQKALEVVELEQQARMVKELDGSVMKCVHDQNGNHVIQKCIERLPQDWIQFIISSFYGKVLALSTHPYGCRVIQRVLEHIDDIETQRIIMEEIMDSVCTLAQDQYGNYVIQHIIQHGKPHERSEIINKLAGQIVKMSQQKFASNVVEKCLTFGGPEERQVLVNEMLGYTDENEPLQAMMKDPFGNYVVQKVLETCDDQSLALILSRIKVHLNALKRYTYGKHIVARVEKLITTGERRIGLSSSLAANTTP</sequence>
<organism>
    <name type="scientific">Arabidopsis thaliana</name>
    <name type="common">Mouse-ear cress</name>
    <dbReference type="NCBI Taxonomy" id="3702"/>
    <lineage>
        <taxon>Eukaryota</taxon>
        <taxon>Viridiplantae</taxon>
        <taxon>Streptophyta</taxon>
        <taxon>Embryophyta</taxon>
        <taxon>Tracheophyta</taxon>
        <taxon>Spermatophyta</taxon>
        <taxon>Magnoliopsida</taxon>
        <taxon>eudicotyledons</taxon>
        <taxon>Gunneridae</taxon>
        <taxon>Pentapetalae</taxon>
        <taxon>rosids</taxon>
        <taxon>malvids</taxon>
        <taxon>Brassicales</taxon>
        <taxon>Brassicaceae</taxon>
        <taxon>Camelineae</taxon>
        <taxon>Arabidopsis</taxon>
    </lineage>
</organism>
<dbReference type="EMBL" id="AC009400">
    <property type="protein sequence ID" value="AAF02808.1"/>
    <property type="status" value="ALT_SEQ"/>
    <property type="molecule type" value="Genomic_DNA"/>
</dbReference>
<dbReference type="EMBL" id="CP002686">
    <property type="protein sequence ID" value="AEE74896.1"/>
    <property type="molecule type" value="Genomic_DNA"/>
</dbReference>
<dbReference type="EMBL" id="AK117911">
    <property type="protein sequence ID" value="BAC42549.1"/>
    <property type="status" value="ALT_INIT"/>
    <property type="molecule type" value="mRNA"/>
</dbReference>
<dbReference type="EMBL" id="BT005311">
    <property type="protein sequence ID" value="AAO63375.1"/>
    <property type="molecule type" value="mRNA"/>
</dbReference>
<dbReference type="RefSeq" id="NP_187647.2">
    <property type="nucleotide sequence ID" value="NM_111871.7"/>
</dbReference>
<dbReference type="SMR" id="Q9SS47"/>
<dbReference type="BioGRID" id="5532">
    <property type="interactions" value="1"/>
</dbReference>
<dbReference type="FunCoup" id="Q9SS47">
    <property type="interactions" value="226"/>
</dbReference>
<dbReference type="STRING" id="3702.Q9SS47"/>
<dbReference type="GlyGen" id="Q9SS47">
    <property type="glycosylation" value="3 sites, 1 O-linked glycan (3 sites)"/>
</dbReference>
<dbReference type="iPTMnet" id="Q9SS47"/>
<dbReference type="PaxDb" id="3702-AT3G10360.1"/>
<dbReference type="ProteomicsDB" id="226082"/>
<dbReference type="EnsemblPlants" id="AT3G10360.1">
    <property type="protein sequence ID" value="AT3G10360.1"/>
    <property type="gene ID" value="AT3G10360"/>
</dbReference>
<dbReference type="GeneID" id="820198"/>
<dbReference type="Gramene" id="AT3G10360.1">
    <property type="protein sequence ID" value="AT3G10360.1"/>
    <property type="gene ID" value="AT3G10360"/>
</dbReference>
<dbReference type="KEGG" id="ath:AT3G10360"/>
<dbReference type="Araport" id="AT3G10360"/>
<dbReference type="TAIR" id="AT3G10360">
    <property type="gene designation" value="PUM4"/>
</dbReference>
<dbReference type="eggNOG" id="KOG1488">
    <property type="taxonomic scope" value="Eukaryota"/>
</dbReference>
<dbReference type="HOGENOM" id="CLU_004017_1_0_1"/>
<dbReference type="InParanoid" id="Q9SS47"/>
<dbReference type="OMA" id="WRIAQRF"/>
<dbReference type="OrthoDB" id="668540at2759"/>
<dbReference type="PhylomeDB" id="Q9SS47"/>
<dbReference type="PRO" id="PR:Q9SS47"/>
<dbReference type="Proteomes" id="UP000006548">
    <property type="component" value="Chromosome 3"/>
</dbReference>
<dbReference type="ExpressionAtlas" id="Q9SS47">
    <property type="expression patterns" value="baseline and differential"/>
</dbReference>
<dbReference type="GO" id="GO:0005737">
    <property type="term" value="C:cytoplasm"/>
    <property type="evidence" value="ECO:0007669"/>
    <property type="project" value="UniProtKB-SubCell"/>
</dbReference>
<dbReference type="GO" id="GO:0003729">
    <property type="term" value="F:mRNA binding"/>
    <property type="evidence" value="ECO:0000314"/>
    <property type="project" value="UniProtKB"/>
</dbReference>
<dbReference type="GO" id="GO:0006417">
    <property type="term" value="P:regulation of translation"/>
    <property type="evidence" value="ECO:0007669"/>
    <property type="project" value="UniProtKB-KW"/>
</dbReference>
<dbReference type="CDD" id="cd07920">
    <property type="entry name" value="Pumilio"/>
    <property type="match status" value="1"/>
</dbReference>
<dbReference type="FunFam" id="1.25.10.10:FF:000004">
    <property type="entry name" value="Pumilio homolog 1 isoform 2"/>
    <property type="match status" value="1"/>
</dbReference>
<dbReference type="Gene3D" id="1.25.10.10">
    <property type="entry name" value="Leucine-rich Repeat Variant"/>
    <property type="match status" value="1"/>
</dbReference>
<dbReference type="InterPro" id="IPR011989">
    <property type="entry name" value="ARM-like"/>
</dbReference>
<dbReference type="InterPro" id="IPR016024">
    <property type="entry name" value="ARM-type_fold"/>
</dbReference>
<dbReference type="InterPro" id="IPR012940">
    <property type="entry name" value="NABP"/>
</dbReference>
<dbReference type="InterPro" id="IPR033133">
    <property type="entry name" value="PUM-HD"/>
</dbReference>
<dbReference type="InterPro" id="IPR033712">
    <property type="entry name" value="Pumilio_RNA-bd"/>
</dbReference>
<dbReference type="InterPro" id="IPR001313">
    <property type="entry name" value="Pumilio_RNA-bd_rpt"/>
</dbReference>
<dbReference type="PANTHER" id="PTHR12537:SF12">
    <property type="entry name" value="MATERNAL PROTEIN PUMILIO"/>
    <property type="match status" value="1"/>
</dbReference>
<dbReference type="PANTHER" id="PTHR12537">
    <property type="entry name" value="RNA BINDING PROTEIN PUMILIO-RELATED"/>
    <property type="match status" value="1"/>
</dbReference>
<dbReference type="Pfam" id="PF07990">
    <property type="entry name" value="NABP"/>
    <property type="match status" value="1"/>
</dbReference>
<dbReference type="Pfam" id="PF00806">
    <property type="entry name" value="PUF"/>
    <property type="match status" value="8"/>
</dbReference>
<dbReference type="SMART" id="SM00025">
    <property type="entry name" value="Pumilio"/>
    <property type="match status" value="8"/>
</dbReference>
<dbReference type="SUPFAM" id="SSF48371">
    <property type="entry name" value="ARM repeat"/>
    <property type="match status" value="1"/>
</dbReference>
<dbReference type="PROSITE" id="PS50302">
    <property type="entry name" value="PUM"/>
    <property type="match status" value="9"/>
</dbReference>
<dbReference type="PROSITE" id="PS50303">
    <property type="entry name" value="PUM_HD"/>
    <property type="match status" value="1"/>
</dbReference>
<keyword id="KW-0963">Cytoplasm</keyword>
<keyword id="KW-0597">Phosphoprotein</keyword>
<keyword id="KW-1185">Reference proteome</keyword>
<keyword id="KW-0677">Repeat</keyword>
<keyword id="KW-0694">RNA-binding</keyword>
<keyword id="KW-0810">Translation regulation</keyword>